<organism>
    <name type="scientific">Salmonella dublin (strain CT_02021853)</name>
    <dbReference type="NCBI Taxonomy" id="439851"/>
    <lineage>
        <taxon>Bacteria</taxon>
        <taxon>Pseudomonadati</taxon>
        <taxon>Pseudomonadota</taxon>
        <taxon>Gammaproteobacteria</taxon>
        <taxon>Enterobacterales</taxon>
        <taxon>Enterobacteriaceae</taxon>
        <taxon>Salmonella</taxon>
    </lineage>
</organism>
<protein>
    <recommendedName>
        <fullName evidence="1">Tryptophan synthase alpha chain</fullName>
        <ecNumber evidence="1">4.2.1.20</ecNumber>
    </recommendedName>
</protein>
<sequence>MERYENLFAQLNDRREGAFVPFVTLGDPGIEQSLKIIDTLIDAGADALELGVPFSDPLADGPTIQNANLRAFAAGVTPAQCFEMLALIREKHPTIPIGLLMYANLVFNNGIDAFYARCEQVGVDSVLVADVPVEESAPFRQAALRHNIAPIFICPPNADDDLLRQVASYGRGYTYLLSRSGVTGAENRGALPLHHLIEKLKEYHAAPALQGFGISSPEQVSAAVRAGAAGAISGSAIVKIIEKNLASPEQMLAELRSFVSAMKAASRA</sequence>
<comment type="function">
    <text evidence="1">The alpha subunit is responsible for the aldol cleavage of indoleglycerol phosphate to indole and glyceraldehyde 3-phosphate.</text>
</comment>
<comment type="catalytic activity">
    <reaction evidence="1">
        <text>(1S,2R)-1-C-(indol-3-yl)glycerol 3-phosphate + L-serine = D-glyceraldehyde 3-phosphate + L-tryptophan + H2O</text>
        <dbReference type="Rhea" id="RHEA:10532"/>
        <dbReference type="ChEBI" id="CHEBI:15377"/>
        <dbReference type="ChEBI" id="CHEBI:33384"/>
        <dbReference type="ChEBI" id="CHEBI:57912"/>
        <dbReference type="ChEBI" id="CHEBI:58866"/>
        <dbReference type="ChEBI" id="CHEBI:59776"/>
        <dbReference type="EC" id="4.2.1.20"/>
    </reaction>
</comment>
<comment type="pathway">
    <text evidence="1">Amino-acid biosynthesis; L-tryptophan biosynthesis; L-tryptophan from chorismate: step 5/5.</text>
</comment>
<comment type="subunit">
    <text evidence="1">Tetramer of two alpha and two beta chains.</text>
</comment>
<comment type="similarity">
    <text evidence="1">Belongs to the TrpA family.</text>
</comment>
<proteinExistence type="inferred from homology"/>
<feature type="chain" id="PRO_1000095747" description="Tryptophan synthase alpha chain">
    <location>
        <begin position="1"/>
        <end position="268"/>
    </location>
</feature>
<feature type="active site" description="Proton acceptor" evidence="1">
    <location>
        <position position="49"/>
    </location>
</feature>
<feature type="active site" description="Proton acceptor" evidence="1">
    <location>
        <position position="60"/>
    </location>
</feature>
<keyword id="KW-0028">Amino-acid biosynthesis</keyword>
<keyword id="KW-0057">Aromatic amino acid biosynthesis</keyword>
<keyword id="KW-0456">Lyase</keyword>
<keyword id="KW-0822">Tryptophan biosynthesis</keyword>
<evidence type="ECO:0000255" key="1">
    <source>
        <dbReference type="HAMAP-Rule" id="MF_00131"/>
    </source>
</evidence>
<accession>B5FU65</accession>
<dbReference type="EC" id="4.2.1.20" evidence="1"/>
<dbReference type="EMBL" id="CP001144">
    <property type="protein sequence ID" value="ACH77330.1"/>
    <property type="molecule type" value="Genomic_DNA"/>
</dbReference>
<dbReference type="RefSeq" id="WP_000443029.1">
    <property type="nucleotide sequence ID" value="NC_011205.1"/>
</dbReference>
<dbReference type="SMR" id="B5FU65"/>
<dbReference type="KEGG" id="sed:SeD_A1601"/>
<dbReference type="HOGENOM" id="CLU_016734_0_4_6"/>
<dbReference type="UniPathway" id="UPA00035">
    <property type="reaction ID" value="UER00044"/>
</dbReference>
<dbReference type="Proteomes" id="UP000008322">
    <property type="component" value="Chromosome"/>
</dbReference>
<dbReference type="GO" id="GO:0005829">
    <property type="term" value="C:cytosol"/>
    <property type="evidence" value="ECO:0007669"/>
    <property type="project" value="TreeGrafter"/>
</dbReference>
<dbReference type="GO" id="GO:0004834">
    <property type="term" value="F:tryptophan synthase activity"/>
    <property type="evidence" value="ECO:0007669"/>
    <property type="project" value="UniProtKB-UniRule"/>
</dbReference>
<dbReference type="CDD" id="cd04724">
    <property type="entry name" value="Tryptophan_synthase_alpha"/>
    <property type="match status" value="1"/>
</dbReference>
<dbReference type="FunFam" id="3.20.20.70:FF:000037">
    <property type="entry name" value="Tryptophan synthase alpha chain"/>
    <property type="match status" value="1"/>
</dbReference>
<dbReference type="Gene3D" id="3.20.20.70">
    <property type="entry name" value="Aldolase class I"/>
    <property type="match status" value="1"/>
</dbReference>
<dbReference type="HAMAP" id="MF_00131">
    <property type="entry name" value="Trp_synth_alpha"/>
    <property type="match status" value="1"/>
</dbReference>
<dbReference type="InterPro" id="IPR013785">
    <property type="entry name" value="Aldolase_TIM"/>
</dbReference>
<dbReference type="InterPro" id="IPR011060">
    <property type="entry name" value="RibuloseP-bd_barrel"/>
</dbReference>
<dbReference type="InterPro" id="IPR018204">
    <property type="entry name" value="Trp_synthase_alpha_AS"/>
</dbReference>
<dbReference type="InterPro" id="IPR002028">
    <property type="entry name" value="Trp_synthase_suA"/>
</dbReference>
<dbReference type="NCBIfam" id="TIGR00262">
    <property type="entry name" value="trpA"/>
    <property type="match status" value="1"/>
</dbReference>
<dbReference type="PANTHER" id="PTHR43406:SF1">
    <property type="entry name" value="TRYPTOPHAN SYNTHASE ALPHA CHAIN, CHLOROPLASTIC"/>
    <property type="match status" value="1"/>
</dbReference>
<dbReference type="PANTHER" id="PTHR43406">
    <property type="entry name" value="TRYPTOPHAN SYNTHASE, ALPHA CHAIN"/>
    <property type="match status" value="1"/>
</dbReference>
<dbReference type="Pfam" id="PF00290">
    <property type="entry name" value="Trp_syntA"/>
    <property type="match status" value="1"/>
</dbReference>
<dbReference type="SUPFAM" id="SSF51366">
    <property type="entry name" value="Ribulose-phoshate binding barrel"/>
    <property type="match status" value="1"/>
</dbReference>
<dbReference type="PROSITE" id="PS00167">
    <property type="entry name" value="TRP_SYNTHASE_ALPHA"/>
    <property type="match status" value="1"/>
</dbReference>
<gene>
    <name evidence="1" type="primary">trpA</name>
    <name type="ordered locus">SeD_A1601</name>
</gene>
<name>TRPA_SALDC</name>
<reference key="1">
    <citation type="journal article" date="2011" name="J. Bacteriol.">
        <title>Comparative genomics of 28 Salmonella enterica isolates: evidence for CRISPR-mediated adaptive sublineage evolution.</title>
        <authorList>
            <person name="Fricke W.F."/>
            <person name="Mammel M.K."/>
            <person name="McDermott P.F."/>
            <person name="Tartera C."/>
            <person name="White D.G."/>
            <person name="Leclerc J.E."/>
            <person name="Ravel J."/>
            <person name="Cebula T.A."/>
        </authorList>
    </citation>
    <scope>NUCLEOTIDE SEQUENCE [LARGE SCALE GENOMIC DNA]</scope>
    <source>
        <strain>CT_02021853</strain>
    </source>
</reference>